<feature type="chain" id="PRO_0000402191" description="Arrestin-related trafficking adapter 10">
    <location>
        <begin position="1"/>
        <end position="430"/>
    </location>
</feature>
<feature type="region of interest" description="Disordered" evidence="2">
    <location>
        <begin position="55"/>
        <end position="75"/>
    </location>
</feature>
<feature type="compositionally biased region" description="Polar residues" evidence="2">
    <location>
        <begin position="63"/>
        <end position="72"/>
    </location>
</feature>
<gene>
    <name type="primary">ART10</name>
    <name type="ordered locus">AER059C</name>
</gene>
<organism>
    <name type="scientific">Eremothecium gossypii (strain ATCC 10895 / CBS 109.51 / FGSC 9923 / NRRL Y-1056)</name>
    <name type="common">Yeast</name>
    <name type="synonym">Ashbya gossypii</name>
    <dbReference type="NCBI Taxonomy" id="284811"/>
    <lineage>
        <taxon>Eukaryota</taxon>
        <taxon>Fungi</taxon>
        <taxon>Dikarya</taxon>
        <taxon>Ascomycota</taxon>
        <taxon>Saccharomycotina</taxon>
        <taxon>Saccharomycetes</taxon>
        <taxon>Saccharomycetales</taxon>
        <taxon>Saccharomycetaceae</taxon>
        <taxon>Eremothecium</taxon>
    </lineage>
</organism>
<dbReference type="EMBL" id="AE016818">
    <property type="protein sequence ID" value="AAS52743.1"/>
    <property type="molecule type" value="Genomic_DNA"/>
</dbReference>
<dbReference type="RefSeq" id="NP_984919.1">
    <property type="nucleotide sequence ID" value="NM_210273.1"/>
</dbReference>
<dbReference type="FunCoup" id="Q757F4">
    <property type="interactions" value="50"/>
</dbReference>
<dbReference type="STRING" id="284811.Q757F4"/>
<dbReference type="EnsemblFungi" id="AAS52743">
    <property type="protein sequence ID" value="AAS52743"/>
    <property type="gene ID" value="AGOS_AER059C"/>
</dbReference>
<dbReference type="GeneID" id="4621122"/>
<dbReference type="KEGG" id="ago:AGOS_AER059C"/>
<dbReference type="eggNOG" id="ENOG502QWIY">
    <property type="taxonomic scope" value="Eukaryota"/>
</dbReference>
<dbReference type="HOGENOM" id="CLU_540776_0_0_1"/>
<dbReference type="InParanoid" id="Q757F4"/>
<dbReference type="OMA" id="YSFKTCT"/>
<dbReference type="OrthoDB" id="3365616at2759"/>
<dbReference type="Proteomes" id="UP000000591">
    <property type="component" value="Chromosome V"/>
</dbReference>
<dbReference type="GO" id="GO:0005737">
    <property type="term" value="C:cytoplasm"/>
    <property type="evidence" value="ECO:0000318"/>
    <property type="project" value="GO_Central"/>
</dbReference>
<dbReference type="GO" id="GO:0005829">
    <property type="term" value="C:cytosol"/>
    <property type="evidence" value="ECO:0000318"/>
    <property type="project" value="GO_Central"/>
</dbReference>
<dbReference type="GO" id="GO:0005886">
    <property type="term" value="C:plasma membrane"/>
    <property type="evidence" value="ECO:0000318"/>
    <property type="project" value="GO_Central"/>
</dbReference>
<dbReference type="GO" id="GO:0030674">
    <property type="term" value="F:protein-macromolecule adaptor activity"/>
    <property type="evidence" value="ECO:0000318"/>
    <property type="project" value="GO_Central"/>
</dbReference>
<dbReference type="GO" id="GO:0031625">
    <property type="term" value="F:ubiquitin protein ligase binding"/>
    <property type="evidence" value="ECO:0000318"/>
    <property type="project" value="GO_Central"/>
</dbReference>
<dbReference type="GO" id="GO:0070086">
    <property type="term" value="P:ubiquitin-dependent endocytosis"/>
    <property type="evidence" value="ECO:0000318"/>
    <property type="project" value="GO_Central"/>
</dbReference>
<dbReference type="CDD" id="cd22952">
    <property type="entry name" value="ART10-like"/>
    <property type="match status" value="1"/>
</dbReference>
<dbReference type="Gene3D" id="2.60.40.640">
    <property type="match status" value="1"/>
</dbReference>
<dbReference type="InterPro" id="IPR014752">
    <property type="entry name" value="Arrestin-like_C"/>
</dbReference>
<dbReference type="InterPro" id="IPR050357">
    <property type="entry name" value="Arrestin_domain-protein"/>
</dbReference>
<dbReference type="PANTHER" id="PTHR11188">
    <property type="entry name" value="ARRESTIN DOMAIN CONTAINING PROTEIN"/>
    <property type="match status" value="1"/>
</dbReference>
<dbReference type="PANTHER" id="PTHR11188:SF17">
    <property type="entry name" value="FI21816P1"/>
    <property type="match status" value="1"/>
</dbReference>
<name>ART10_EREGS</name>
<protein>
    <recommendedName>
        <fullName>Arrestin-related trafficking adapter 10</fullName>
    </recommendedName>
</protein>
<comment type="function">
    <text evidence="1">May regulate endocytosis by recruiting RSP5 ubiquitin ligase activity to specific plasma membrane proteins in response to extracellular stimuli.</text>
</comment>
<comment type="subcellular location">
    <subcellularLocation>
        <location evidence="1">Cytoplasm</location>
    </subcellularLocation>
</comment>
<comment type="similarity">
    <text evidence="3">Belongs to the ART10 family.</text>
</comment>
<reference key="1">
    <citation type="journal article" date="2004" name="Science">
        <title>The Ashbya gossypii genome as a tool for mapping the ancient Saccharomyces cerevisiae genome.</title>
        <authorList>
            <person name="Dietrich F.S."/>
            <person name="Voegeli S."/>
            <person name="Brachat S."/>
            <person name="Lerch A."/>
            <person name="Gates K."/>
            <person name="Steiner S."/>
            <person name="Mohr C."/>
            <person name="Poehlmann R."/>
            <person name="Luedi P."/>
            <person name="Choi S."/>
            <person name="Wing R.A."/>
            <person name="Flavier A."/>
            <person name="Gaffney T.D."/>
            <person name="Philippsen P."/>
        </authorList>
    </citation>
    <scope>NUCLEOTIDE SEQUENCE [LARGE SCALE GENOMIC DNA]</scope>
    <source>
        <strain>ATCC 10895 / CBS 109.51 / FGSC 9923 / NRRL Y-1056</strain>
    </source>
</reference>
<reference key="2">
    <citation type="journal article" date="2013" name="G3 (Bethesda)">
        <title>Genomes of Ashbya fungi isolated from insects reveal four mating-type loci, numerous translocations, lack of transposons, and distinct gene duplications.</title>
        <authorList>
            <person name="Dietrich F.S."/>
            <person name="Voegeli S."/>
            <person name="Kuo S."/>
            <person name="Philippsen P."/>
        </authorList>
    </citation>
    <scope>GENOME REANNOTATION</scope>
    <source>
        <strain>ATCC 10895 / CBS 109.51 / FGSC 9923 / NRRL Y-1056</strain>
    </source>
</reference>
<proteinExistence type="inferred from homology"/>
<accession>Q757F4</accession>
<evidence type="ECO:0000250" key="1"/>
<evidence type="ECO:0000256" key="2">
    <source>
        <dbReference type="SAM" id="MobiDB-lite"/>
    </source>
</evidence>
<evidence type="ECO:0000305" key="3"/>
<sequence>MTTKITLKLNPPHNGRYYTEDDIISGSVVLKLAKATAVKQLRVILKGTSQTMTLAEADRHSSRLPQDPQTQYTKEKSTHILFHQGVQLLPPTGVEDSIKLGQDTYKYGFEFRLAGGPKCVSGHQATSHSFLEDKAHEHYGEQLPPSFNDRHEGGGVTTEELFFYNLGKVRYTVRAEADVATGNKWAPKSPLHDTMVISFLPLQCQAYVENACTSAGSDDTLVNYTALPRTYRAAADVVLSDGLSVTPEVRSNALAYVHRLDYLFRESSGKFGNIFMVFSGDPTKHSVKLTRLVLSLHEKVSFTANGHTNKNLSQLKLMDTPLDDELQLRDLHILEDGSREGKLNLGDHPVLSRLRFNEEDYIHRGNTLFSFTTCNIKREYYFQLDLHWKVDATAVRSEIIVDPVTVYAESAPPAFEGLPPYPEKPPKYEA</sequence>
<keyword id="KW-0963">Cytoplasm</keyword>
<keyword id="KW-0254">Endocytosis</keyword>
<keyword id="KW-1185">Reference proteome</keyword>